<protein>
    <recommendedName>
        <fullName>Uncharacterized protein C16orf74 homolog</fullName>
    </recommendedName>
</protein>
<accession>Q8K1L6</accession>
<accession>E9PUE0</accession>
<evidence type="ECO:0000250" key="1">
    <source>
        <dbReference type="UniProtKB" id="Q96GX8"/>
    </source>
</evidence>
<evidence type="ECO:0000256" key="2">
    <source>
        <dbReference type="SAM" id="MobiDB-lite"/>
    </source>
</evidence>
<evidence type="ECO:0000305" key="3"/>
<evidence type="ECO:0000312" key="4">
    <source>
        <dbReference type="Proteomes" id="UP000000589"/>
    </source>
</evidence>
<organism>
    <name type="scientific">Mus musculus</name>
    <name type="common">Mouse</name>
    <dbReference type="NCBI Taxonomy" id="10090"/>
    <lineage>
        <taxon>Eukaryota</taxon>
        <taxon>Metazoa</taxon>
        <taxon>Chordata</taxon>
        <taxon>Craniata</taxon>
        <taxon>Vertebrata</taxon>
        <taxon>Euteleostomi</taxon>
        <taxon>Mammalia</taxon>
        <taxon>Eutheria</taxon>
        <taxon>Euarchontoglires</taxon>
        <taxon>Glires</taxon>
        <taxon>Rodentia</taxon>
        <taxon>Myomorpha</taxon>
        <taxon>Muroidea</taxon>
        <taxon>Muridae</taxon>
        <taxon>Murinae</taxon>
        <taxon>Mus</taxon>
        <taxon>Mus</taxon>
    </lineage>
</organism>
<feature type="chain" id="PRO_0000264622" description="Uncharacterized protein C16orf74 homolog">
    <location>
        <begin position="1"/>
        <end position="111"/>
    </location>
</feature>
<feature type="region of interest" description="Disordered" evidence="2">
    <location>
        <begin position="12"/>
        <end position="34"/>
    </location>
</feature>
<feature type="region of interest" description="Required for interaction with PPP3CA" evidence="1">
    <location>
        <begin position="71"/>
        <end position="76"/>
    </location>
</feature>
<feature type="modified residue" description="Phosphothreonine" evidence="1">
    <location>
        <position position="79"/>
    </location>
</feature>
<feature type="modified residue" description="Phosphothreonine" evidence="1">
    <location>
        <position position="81"/>
    </location>
</feature>
<reference evidence="4" key="1">
    <citation type="journal article" date="2009" name="PLoS Biol.">
        <title>Lineage-specific biology revealed by a finished genome assembly of the mouse.</title>
        <authorList>
            <person name="Church D.M."/>
            <person name="Goodstadt L."/>
            <person name="Hillier L.W."/>
            <person name="Zody M.C."/>
            <person name="Goldstein S."/>
            <person name="She X."/>
            <person name="Bult C.J."/>
            <person name="Agarwala R."/>
            <person name="Cherry J.L."/>
            <person name="DiCuccio M."/>
            <person name="Hlavina W."/>
            <person name="Kapustin Y."/>
            <person name="Meric P."/>
            <person name="Maglott D."/>
            <person name="Birtle Z."/>
            <person name="Marques A.C."/>
            <person name="Graves T."/>
            <person name="Zhou S."/>
            <person name="Teague B."/>
            <person name="Potamousis K."/>
            <person name="Churas C."/>
            <person name="Place M."/>
            <person name="Herschleb J."/>
            <person name="Runnheim R."/>
            <person name="Forrest D."/>
            <person name="Amos-Landgraf J."/>
            <person name="Schwartz D.C."/>
            <person name="Cheng Z."/>
            <person name="Lindblad-Toh K."/>
            <person name="Eichler E.E."/>
            <person name="Ponting C.P."/>
        </authorList>
    </citation>
    <scope>NUCLEOTIDE SEQUENCE [LARGE SCALE GENOMIC DNA]</scope>
    <source>
        <strain evidence="4">C57BL/6J</strain>
    </source>
</reference>
<reference key="2">
    <citation type="journal article" date="2004" name="Genome Res.">
        <title>The status, quality, and expansion of the NIH full-length cDNA project: the Mammalian Gene Collection (MGC).</title>
        <authorList>
            <consortium name="The MGC Project Team"/>
        </authorList>
    </citation>
    <scope>NUCLEOTIDE SEQUENCE [LARGE SCALE MRNA]</scope>
    <source>
        <strain>C57BL/6J</strain>
        <tissue>Mammary gland</tissue>
    </source>
</reference>
<reference key="3">
    <citation type="journal article" date="2005" name="Science">
        <title>The transcriptional landscape of the mammalian genome.</title>
        <authorList>
            <person name="Carninci P."/>
            <person name="Kasukawa T."/>
            <person name="Katayama S."/>
            <person name="Gough J."/>
            <person name="Frith M.C."/>
            <person name="Maeda N."/>
            <person name="Oyama R."/>
            <person name="Ravasi T."/>
            <person name="Lenhard B."/>
            <person name="Wells C."/>
            <person name="Kodzius R."/>
            <person name="Shimokawa K."/>
            <person name="Bajic V.B."/>
            <person name="Brenner S.E."/>
            <person name="Batalov S."/>
            <person name="Forrest A.R."/>
            <person name="Zavolan M."/>
            <person name="Davis M.J."/>
            <person name="Wilming L.G."/>
            <person name="Aidinis V."/>
            <person name="Allen J.E."/>
            <person name="Ambesi-Impiombato A."/>
            <person name="Apweiler R."/>
            <person name="Aturaliya R.N."/>
            <person name="Bailey T.L."/>
            <person name="Bansal M."/>
            <person name="Baxter L."/>
            <person name="Beisel K.W."/>
            <person name="Bersano T."/>
            <person name="Bono H."/>
            <person name="Chalk A.M."/>
            <person name="Chiu K.P."/>
            <person name="Choudhary V."/>
            <person name="Christoffels A."/>
            <person name="Clutterbuck D.R."/>
            <person name="Crowe M.L."/>
            <person name="Dalla E."/>
            <person name="Dalrymple B.P."/>
            <person name="de Bono B."/>
            <person name="Della Gatta G."/>
            <person name="di Bernardo D."/>
            <person name="Down T."/>
            <person name="Engstrom P."/>
            <person name="Fagiolini M."/>
            <person name="Faulkner G."/>
            <person name="Fletcher C.F."/>
            <person name="Fukushima T."/>
            <person name="Furuno M."/>
            <person name="Futaki S."/>
            <person name="Gariboldi M."/>
            <person name="Georgii-Hemming P."/>
            <person name="Gingeras T.R."/>
            <person name="Gojobori T."/>
            <person name="Green R.E."/>
            <person name="Gustincich S."/>
            <person name="Harbers M."/>
            <person name="Hayashi Y."/>
            <person name="Hensch T.K."/>
            <person name="Hirokawa N."/>
            <person name="Hill D."/>
            <person name="Huminiecki L."/>
            <person name="Iacono M."/>
            <person name="Ikeo K."/>
            <person name="Iwama A."/>
            <person name="Ishikawa T."/>
            <person name="Jakt M."/>
            <person name="Kanapin A."/>
            <person name="Katoh M."/>
            <person name="Kawasawa Y."/>
            <person name="Kelso J."/>
            <person name="Kitamura H."/>
            <person name="Kitano H."/>
            <person name="Kollias G."/>
            <person name="Krishnan S.P."/>
            <person name="Kruger A."/>
            <person name="Kummerfeld S.K."/>
            <person name="Kurochkin I.V."/>
            <person name="Lareau L.F."/>
            <person name="Lazarevic D."/>
            <person name="Lipovich L."/>
            <person name="Liu J."/>
            <person name="Liuni S."/>
            <person name="McWilliam S."/>
            <person name="Madan Babu M."/>
            <person name="Madera M."/>
            <person name="Marchionni L."/>
            <person name="Matsuda H."/>
            <person name="Matsuzawa S."/>
            <person name="Miki H."/>
            <person name="Mignone F."/>
            <person name="Miyake S."/>
            <person name="Morris K."/>
            <person name="Mottagui-Tabar S."/>
            <person name="Mulder N."/>
            <person name="Nakano N."/>
            <person name="Nakauchi H."/>
            <person name="Ng P."/>
            <person name="Nilsson R."/>
            <person name="Nishiguchi S."/>
            <person name="Nishikawa S."/>
            <person name="Nori F."/>
            <person name="Ohara O."/>
            <person name="Okazaki Y."/>
            <person name="Orlando V."/>
            <person name="Pang K.C."/>
            <person name="Pavan W.J."/>
            <person name="Pavesi G."/>
            <person name="Pesole G."/>
            <person name="Petrovsky N."/>
            <person name="Piazza S."/>
            <person name="Reed J."/>
            <person name="Reid J.F."/>
            <person name="Ring B.Z."/>
            <person name="Ringwald M."/>
            <person name="Rost B."/>
            <person name="Ruan Y."/>
            <person name="Salzberg S.L."/>
            <person name="Sandelin A."/>
            <person name="Schneider C."/>
            <person name="Schoenbach C."/>
            <person name="Sekiguchi K."/>
            <person name="Semple C.A."/>
            <person name="Seno S."/>
            <person name="Sessa L."/>
            <person name="Sheng Y."/>
            <person name="Shibata Y."/>
            <person name="Shimada H."/>
            <person name="Shimada K."/>
            <person name="Silva D."/>
            <person name="Sinclair B."/>
            <person name="Sperling S."/>
            <person name="Stupka E."/>
            <person name="Sugiura K."/>
            <person name="Sultana R."/>
            <person name="Takenaka Y."/>
            <person name="Taki K."/>
            <person name="Tammoja K."/>
            <person name="Tan S.L."/>
            <person name="Tang S."/>
            <person name="Taylor M.S."/>
            <person name="Tegner J."/>
            <person name="Teichmann S.A."/>
            <person name="Ueda H.R."/>
            <person name="van Nimwegen E."/>
            <person name="Verardo R."/>
            <person name="Wei C.L."/>
            <person name="Yagi K."/>
            <person name="Yamanishi H."/>
            <person name="Zabarovsky E."/>
            <person name="Zhu S."/>
            <person name="Zimmer A."/>
            <person name="Hide W."/>
            <person name="Bult C."/>
            <person name="Grimmond S.M."/>
            <person name="Teasdale R.D."/>
            <person name="Liu E.T."/>
            <person name="Brusic V."/>
            <person name="Quackenbush J."/>
            <person name="Wahlestedt C."/>
            <person name="Mattick J.S."/>
            <person name="Hume D.A."/>
            <person name="Kai C."/>
            <person name="Sasaki D."/>
            <person name="Tomaru Y."/>
            <person name="Fukuda S."/>
            <person name="Kanamori-Katayama M."/>
            <person name="Suzuki M."/>
            <person name="Aoki J."/>
            <person name="Arakawa T."/>
            <person name="Iida J."/>
            <person name="Imamura K."/>
            <person name="Itoh M."/>
            <person name="Kato T."/>
            <person name="Kawaji H."/>
            <person name="Kawagashira N."/>
            <person name="Kawashima T."/>
            <person name="Kojima M."/>
            <person name="Kondo S."/>
            <person name="Konno H."/>
            <person name="Nakano K."/>
            <person name="Ninomiya N."/>
            <person name="Nishio T."/>
            <person name="Okada M."/>
            <person name="Plessy C."/>
            <person name="Shibata K."/>
            <person name="Shiraki T."/>
            <person name="Suzuki S."/>
            <person name="Tagami M."/>
            <person name="Waki K."/>
            <person name="Watahiki A."/>
            <person name="Okamura-Oho Y."/>
            <person name="Suzuki H."/>
            <person name="Kawai J."/>
            <person name="Hayashizaki Y."/>
        </authorList>
    </citation>
    <scope>NUCLEOTIDE SEQUENCE [LARGE SCALE MRNA] OF 9-111</scope>
    <source>
        <strain>C57BL/6J</strain>
    </source>
</reference>
<dbReference type="EMBL" id="AC103360">
    <property type="status" value="NOT_ANNOTATED_CDS"/>
    <property type="molecule type" value="Genomic_DNA"/>
</dbReference>
<dbReference type="EMBL" id="BC027666">
    <property type="protein sequence ID" value="AAH27666.1"/>
    <property type="status" value="ALT_INIT"/>
    <property type="molecule type" value="mRNA"/>
</dbReference>
<dbReference type="EMBL" id="AK004494">
    <property type="protein sequence ID" value="BAE43181.1"/>
    <property type="status" value="ALT_INIT"/>
    <property type="molecule type" value="mRNA"/>
</dbReference>
<dbReference type="CCDS" id="CCDS52690.1"/>
<dbReference type="RefSeq" id="NP_932105.2">
    <property type="nucleotide sequence ID" value="NM_197988.3"/>
</dbReference>
<dbReference type="STRING" id="10090.ENSMUSP00000119467"/>
<dbReference type="iPTMnet" id="Q8K1L6"/>
<dbReference type="PhosphoSitePlus" id="Q8K1L6"/>
<dbReference type="SwissPalm" id="Q8K1L6"/>
<dbReference type="PaxDb" id="10090-ENSMUSP00000119467"/>
<dbReference type="DNASU" id="68918"/>
<dbReference type="Ensembl" id="ENSMUST00000123927.9">
    <property type="protein sequence ID" value="ENSMUSP00000119467.2"/>
    <property type="gene ID" value="ENSMUSG00000043687.17"/>
</dbReference>
<dbReference type="GeneID" id="68918"/>
<dbReference type="KEGG" id="mmu:68918"/>
<dbReference type="UCSC" id="uc009nre.1">
    <property type="organism name" value="mouse"/>
</dbReference>
<dbReference type="AGR" id="MGI:1916168"/>
<dbReference type="MGI" id="MGI:1916168">
    <property type="gene designation" value="1190005I06Rik"/>
</dbReference>
<dbReference type="VEuPathDB" id="HostDB:ENSMUSG00000043687"/>
<dbReference type="eggNOG" id="ENOG502SEPB">
    <property type="taxonomic scope" value="Eukaryota"/>
</dbReference>
<dbReference type="GeneTree" id="ENSGT00390000015933"/>
<dbReference type="HOGENOM" id="CLU_172665_0_0_1"/>
<dbReference type="InParanoid" id="Q8K1L6"/>
<dbReference type="OrthoDB" id="9451159at2759"/>
<dbReference type="TreeFam" id="TF338382"/>
<dbReference type="BioGRID-ORCS" id="68918">
    <property type="hits" value="5 hits in 79 CRISPR screens"/>
</dbReference>
<dbReference type="PRO" id="PR:Q8K1L6"/>
<dbReference type="Proteomes" id="UP000000589">
    <property type="component" value="Chromosome 8"/>
</dbReference>
<dbReference type="RNAct" id="Q8K1L6">
    <property type="molecule type" value="protein"/>
</dbReference>
<dbReference type="Bgee" id="ENSMUSG00000043687">
    <property type="expression patterns" value="Expressed in animal zygote and 77 other cell types or tissues"/>
</dbReference>
<dbReference type="ExpressionAtlas" id="Q8K1L6">
    <property type="expression patterns" value="baseline and differential"/>
</dbReference>
<dbReference type="InterPro" id="IPR027864">
    <property type="entry name" value="DUF4597"/>
</dbReference>
<dbReference type="PANTHER" id="PTHR37455">
    <property type="entry name" value="GENE, 27021-RELATED"/>
    <property type="match status" value="1"/>
</dbReference>
<dbReference type="PANTHER" id="PTHR37455:SF1">
    <property type="entry name" value="SIMILAR TO 1190005I06RIK PROTEIN"/>
    <property type="match status" value="1"/>
</dbReference>
<dbReference type="Pfam" id="PF15366">
    <property type="entry name" value="DUF4597"/>
    <property type="match status" value="1"/>
</dbReference>
<sequence>MTPAAHGCKRVAWCPSRPPASAPSAPQEAARRGDAMGLKPSCLKGFKMCVSSSNNNHDEAPVLNDKHLSVPNIIITPPTPTGMGLSRDSNKQVWMDELGSYQDDGELEPEA</sequence>
<keyword id="KW-0597">Phosphoprotein</keyword>
<keyword id="KW-1185">Reference proteome</keyword>
<proteinExistence type="inferred from homology"/>
<name>CP074_MOUSE</name>
<comment type="subunit">
    <text evidence="1">Interacts (via PxIxIT motif, when phosphorylated on Thr-79) with PPP3CA.</text>
</comment>
<comment type="sequence caution" evidence="3">
    <conflict type="erroneous initiation">
        <sequence resource="EMBL-CDS" id="AAH27666"/>
    </conflict>
    <text>Truncated N-terminus.</text>
</comment>
<comment type="sequence caution" evidence="3">
    <conflict type="erroneous initiation">
        <sequence resource="EMBL-CDS" id="BAE43181"/>
    </conflict>
    <text>Truncated N-terminus.</text>
</comment>